<feature type="chain" id="PRO_0000175824" description="Probable transcriptional regulatory protein LBA0733">
    <location>
        <begin position="1"/>
        <end position="242"/>
    </location>
</feature>
<feature type="region of interest" description="Disordered" evidence="2">
    <location>
        <begin position="1"/>
        <end position="22"/>
    </location>
</feature>
<reference key="1">
    <citation type="journal article" date="2005" name="Proc. Natl. Acad. Sci. U.S.A.">
        <title>Complete genome sequence of the probiotic lactic acid bacterium Lactobacillus acidophilus NCFM.</title>
        <authorList>
            <person name="Altermann E."/>
            <person name="Russell W.M."/>
            <person name="Azcarate-Peril M.A."/>
            <person name="Barrangou R."/>
            <person name="Buck B.L."/>
            <person name="McAuliffe O."/>
            <person name="Souther N."/>
            <person name="Dobson A."/>
            <person name="Duong T."/>
            <person name="Callanan M."/>
            <person name="Lick S."/>
            <person name="Hamrick A."/>
            <person name="Cano R."/>
            <person name="Klaenhammer T.R."/>
        </authorList>
    </citation>
    <scope>NUCLEOTIDE SEQUENCE [LARGE SCALE GENOMIC DNA]</scope>
    <source>
        <strain>ATCC 700396 / NCK56 / N2 / NCFM</strain>
    </source>
</reference>
<dbReference type="EMBL" id="CP000033">
    <property type="protein sequence ID" value="AAV42602.1"/>
    <property type="molecule type" value="Genomic_DNA"/>
</dbReference>
<dbReference type="RefSeq" id="WP_003546668.1">
    <property type="nucleotide sequence ID" value="NC_006814.3"/>
</dbReference>
<dbReference type="RefSeq" id="YP_193633.1">
    <property type="nucleotide sequence ID" value="NC_006814.3"/>
</dbReference>
<dbReference type="SMR" id="Q5FL22"/>
<dbReference type="STRING" id="272621.LBA0733"/>
<dbReference type="KEGG" id="lac:LBA0733"/>
<dbReference type="PATRIC" id="fig|272621.13.peg.697"/>
<dbReference type="eggNOG" id="COG0217">
    <property type="taxonomic scope" value="Bacteria"/>
</dbReference>
<dbReference type="HOGENOM" id="CLU_062974_3_0_9"/>
<dbReference type="OrthoDB" id="9781053at2"/>
<dbReference type="BioCyc" id="LACI272621:G1G49-750-MONOMER"/>
<dbReference type="Proteomes" id="UP000006381">
    <property type="component" value="Chromosome"/>
</dbReference>
<dbReference type="GO" id="GO:0005829">
    <property type="term" value="C:cytosol"/>
    <property type="evidence" value="ECO:0007669"/>
    <property type="project" value="TreeGrafter"/>
</dbReference>
<dbReference type="GO" id="GO:0003677">
    <property type="term" value="F:DNA binding"/>
    <property type="evidence" value="ECO:0007669"/>
    <property type="project" value="UniProtKB-UniRule"/>
</dbReference>
<dbReference type="GO" id="GO:0006355">
    <property type="term" value="P:regulation of DNA-templated transcription"/>
    <property type="evidence" value="ECO:0007669"/>
    <property type="project" value="UniProtKB-UniRule"/>
</dbReference>
<dbReference type="FunFam" id="1.10.10.200:FF:000002">
    <property type="entry name" value="Probable transcriptional regulatory protein CLM62_37755"/>
    <property type="match status" value="1"/>
</dbReference>
<dbReference type="FunFam" id="3.30.70.980:FF:000002">
    <property type="entry name" value="Probable transcriptional regulatory protein YebC"/>
    <property type="match status" value="1"/>
</dbReference>
<dbReference type="Gene3D" id="1.10.10.200">
    <property type="match status" value="1"/>
</dbReference>
<dbReference type="Gene3D" id="3.30.70.980">
    <property type="match status" value="2"/>
</dbReference>
<dbReference type="HAMAP" id="MF_00693">
    <property type="entry name" value="Transcrip_reg_TACO1"/>
    <property type="match status" value="1"/>
</dbReference>
<dbReference type="InterPro" id="IPR017856">
    <property type="entry name" value="Integrase-like_N"/>
</dbReference>
<dbReference type="InterPro" id="IPR048300">
    <property type="entry name" value="TACO1_YebC-like_2nd/3rd_dom"/>
</dbReference>
<dbReference type="InterPro" id="IPR049083">
    <property type="entry name" value="TACO1_YebC_N"/>
</dbReference>
<dbReference type="InterPro" id="IPR002876">
    <property type="entry name" value="Transcrip_reg_TACO1-like"/>
</dbReference>
<dbReference type="InterPro" id="IPR026564">
    <property type="entry name" value="Transcrip_reg_TACO1-like_dom3"/>
</dbReference>
<dbReference type="InterPro" id="IPR029072">
    <property type="entry name" value="YebC-like"/>
</dbReference>
<dbReference type="NCBIfam" id="NF001030">
    <property type="entry name" value="PRK00110.1"/>
    <property type="match status" value="1"/>
</dbReference>
<dbReference type="NCBIfam" id="NF009044">
    <property type="entry name" value="PRK12378.1"/>
    <property type="match status" value="1"/>
</dbReference>
<dbReference type="NCBIfam" id="TIGR01033">
    <property type="entry name" value="YebC/PmpR family DNA-binding transcriptional regulator"/>
    <property type="match status" value="1"/>
</dbReference>
<dbReference type="PANTHER" id="PTHR12532:SF6">
    <property type="entry name" value="TRANSCRIPTIONAL REGULATORY PROTEIN YEBC-RELATED"/>
    <property type="match status" value="1"/>
</dbReference>
<dbReference type="PANTHER" id="PTHR12532">
    <property type="entry name" value="TRANSLATIONAL ACTIVATOR OF CYTOCHROME C OXIDASE 1"/>
    <property type="match status" value="1"/>
</dbReference>
<dbReference type="Pfam" id="PF20772">
    <property type="entry name" value="TACO1_YebC_N"/>
    <property type="match status" value="1"/>
</dbReference>
<dbReference type="Pfam" id="PF01709">
    <property type="entry name" value="Transcrip_reg"/>
    <property type="match status" value="1"/>
</dbReference>
<dbReference type="SUPFAM" id="SSF75625">
    <property type="entry name" value="YebC-like"/>
    <property type="match status" value="1"/>
</dbReference>
<proteinExistence type="inferred from homology"/>
<gene>
    <name type="ordered locus">LBA0733</name>
</gene>
<keyword id="KW-0963">Cytoplasm</keyword>
<keyword id="KW-0238">DNA-binding</keyword>
<keyword id="KW-1185">Reference proteome</keyword>
<keyword id="KW-0804">Transcription</keyword>
<keyword id="KW-0805">Transcription regulation</keyword>
<name>Y733_LACAC</name>
<protein>
    <recommendedName>
        <fullName evidence="1">Probable transcriptional regulatory protein LBA0733</fullName>
    </recommendedName>
</protein>
<evidence type="ECO:0000255" key="1">
    <source>
        <dbReference type="HAMAP-Rule" id="MF_00693"/>
    </source>
</evidence>
<evidence type="ECO:0000256" key="2">
    <source>
        <dbReference type="SAM" id="MobiDB-lite"/>
    </source>
</evidence>
<organism>
    <name type="scientific">Lactobacillus acidophilus (strain ATCC 700396 / NCK56 / N2 / NCFM)</name>
    <dbReference type="NCBI Taxonomy" id="272621"/>
    <lineage>
        <taxon>Bacteria</taxon>
        <taxon>Bacillati</taxon>
        <taxon>Bacillota</taxon>
        <taxon>Bacilli</taxon>
        <taxon>Lactobacillales</taxon>
        <taxon>Lactobacillaceae</taxon>
        <taxon>Lactobacillus</taxon>
    </lineage>
</organism>
<sequence length="242" mass="26546">MSGHSKWHNIQGRKNAQDAKRGKVFQKLSREIYMAAKSGGPDPDGNPALRMVIDKARSNNMPKDNIQRAIKKAEGGSDEHYDEITYEGYAPGGVAVFVEALTDNKNRTASDVRVAFTRNGGSLGATGSVAYMFDRKGYIVIDRSTTDADEDQVLLDVMDAGGDDLQTSDDAYEIYTDPKQFAEVRDALIKAGYKLADAELTMIPQNTTPVPADKKEQFEHLVEALEDSDDVQNVYTAAADED</sequence>
<accession>Q5FL22</accession>
<comment type="subcellular location">
    <subcellularLocation>
        <location evidence="1">Cytoplasm</location>
    </subcellularLocation>
</comment>
<comment type="similarity">
    <text evidence="1">Belongs to the TACO1 family.</text>
</comment>